<sequence>SGETSGEGNGMWFGPRL</sequence>
<protein>
    <recommendedName>
        <fullName evidence="1">Pyrokinin-5</fullName>
    </recommendedName>
    <alternativeName>
        <fullName evidence="1">FXPRL-amide</fullName>
    </alternativeName>
    <alternativeName>
        <fullName evidence="4">PerVi-Capa-PK</fullName>
    </alternativeName>
</protein>
<reference evidence="5" key="1">
    <citation type="journal article" date="2009" name="BMC Evol. Biol.">
        <title>A proteomic approach for studying insect phylogeny: CAPA peptides of ancient insect taxa (Dictyoptera, Blattoptera) as a test case.</title>
        <authorList>
            <person name="Roth S."/>
            <person name="Fromm B."/>
            <person name="Gaede G."/>
            <person name="Predel R."/>
        </authorList>
    </citation>
    <scope>PROTEIN SEQUENCE</scope>
    <scope>AMIDATION AT LEU-17</scope>
    <source>
        <tissue evidence="3">Abdominal perisympathetic organs</tissue>
    </source>
</reference>
<proteinExistence type="evidence at protein level"/>
<name>PPK5_PERVR</name>
<dbReference type="GO" id="GO:0005576">
    <property type="term" value="C:extracellular region"/>
    <property type="evidence" value="ECO:0007669"/>
    <property type="project" value="UniProtKB-SubCell"/>
</dbReference>
<dbReference type="GO" id="GO:0005184">
    <property type="term" value="F:neuropeptide hormone activity"/>
    <property type="evidence" value="ECO:0007669"/>
    <property type="project" value="InterPro"/>
</dbReference>
<dbReference type="GO" id="GO:0007218">
    <property type="term" value="P:neuropeptide signaling pathway"/>
    <property type="evidence" value="ECO:0007669"/>
    <property type="project" value="UniProtKB-KW"/>
</dbReference>
<dbReference type="InterPro" id="IPR001484">
    <property type="entry name" value="Pyrokinin_CS"/>
</dbReference>
<dbReference type="PROSITE" id="PS00539">
    <property type="entry name" value="PYROKININ"/>
    <property type="match status" value="1"/>
</dbReference>
<accession>P85733</accession>
<evidence type="ECO:0000250" key="1">
    <source>
        <dbReference type="UniProtKB" id="P82617"/>
    </source>
</evidence>
<evidence type="ECO:0000255" key="2"/>
<evidence type="ECO:0000269" key="3">
    <source>
    </source>
</evidence>
<evidence type="ECO:0000303" key="4">
    <source>
    </source>
</evidence>
<evidence type="ECO:0000305" key="5"/>
<keyword id="KW-0027">Amidation</keyword>
<keyword id="KW-0903">Direct protein sequencing</keyword>
<keyword id="KW-0527">Neuropeptide</keyword>
<keyword id="KW-0964">Secreted</keyword>
<comment type="function">
    <text evidence="1">Myoactive.</text>
</comment>
<comment type="subcellular location">
    <subcellularLocation>
        <location evidence="5">Secreted</location>
    </subcellularLocation>
</comment>
<comment type="similarity">
    <text evidence="2">Belongs to the pyrokinin family.</text>
</comment>
<organism>
    <name type="scientific">Perisphaeria virescens</name>
    <name type="common">Cockroach</name>
    <dbReference type="NCBI Taxonomy" id="344690"/>
    <lineage>
        <taxon>Eukaryota</taxon>
        <taxon>Metazoa</taxon>
        <taxon>Ecdysozoa</taxon>
        <taxon>Arthropoda</taxon>
        <taxon>Hexapoda</taxon>
        <taxon>Insecta</taxon>
        <taxon>Pterygota</taxon>
        <taxon>Neoptera</taxon>
        <taxon>Polyneoptera</taxon>
        <taxon>Dictyoptera</taxon>
        <taxon>Blattodea</taxon>
        <taxon>Blaberoidea</taxon>
        <taxon>Blaberidae</taxon>
        <taxon>Perisphaerinae</taxon>
        <taxon>Perisphaeria</taxon>
    </lineage>
</organism>
<feature type="peptide" id="PRO_0000378716" description="Pyrokinin-5" evidence="3">
    <location>
        <begin position="1"/>
        <end position="17"/>
    </location>
</feature>
<feature type="modified residue" description="Leucine amide" evidence="3">
    <location>
        <position position="17"/>
    </location>
</feature>